<reference key="1">
    <citation type="journal article" date="2006" name="Proc. Natl. Acad. Sci. U.S.A.">
        <title>Identification of genes subject to positive selection in uropathogenic strains of Escherichia coli: a comparative genomics approach.</title>
        <authorList>
            <person name="Chen S.L."/>
            <person name="Hung C.-S."/>
            <person name="Xu J."/>
            <person name="Reigstad C.S."/>
            <person name="Magrini V."/>
            <person name="Sabo A."/>
            <person name="Blasiar D."/>
            <person name="Bieri T."/>
            <person name="Meyer R.R."/>
            <person name="Ozersky P."/>
            <person name="Armstrong J.R."/>
            <person name="Fulton R.S."/>
            <person name="Latreille J.P."/>
            <person name="Spieth J."/>
            <person name="Hooton T.M."/>
            <person name="Mardis E.R."/>
            <person name="Hultgren S.J."/>
            <person name="Gordon J.I."/>
        </authorList>
    </citation>
    <scope>NUCLEOTIDE SEQUENCE [LARGE SCALE GENOMIC DNA]</scope>
    <source>
        <strain>UTI89 / UPEC</strain>
    </source>
</reference>
<dbReference type="EMBL" id="CP000243">
    <property type="protein sequence ID" value="ABE07819.1"/>
    <property type="molecule type" value="Genomic_DNA"/>
</dbReference>
<dbReference type="RefSeq" id="WP_000667560.1">
    <property type="nucleotide sequence ID" value="NZ_CP064825.1"/>
</dbReference>
<dbReference type="SMR" id="Q1R9Z5"/>
<dbReference type="KEGG" id="eci:UTI89_C2351"/>
<dbReference type="HOGENOM" id="CLU_002755_1_2_6"/>
<dbReference type="Proteomes" id="UP000001952">
    <property type="component" value="Chromosome"/>
</dbReference>
<dbReference type="GO" id="GO:0005886">
    <property type="term" value="C:plasma membrane"/>
    <property type="evidence" value="ECO:0007669"/>
    <property type="project" value="UniProtKB-SubCell"/>
</dbReference>
<dbReference type="GO" id="GO:0042910">
    <property type="term" value="F:xenobiotic transmembrane transporter activity"/>
    <property type="evidence" value="ECO:0007669"/>
    <property type="project" value="TreeGrafter"/>
</dbReference>
<dbReference type="FunFam" id="1.20.1640.10:FF:000001">
    <property type="entry name" value="Efflux pump membrane transporter"/>
    <property type="match status" value="1"/>
</dbReference>
<dbReference type="FunFam" id="3.30.70.1430:FF:000001">
    <property type="entry name" value="Efflux pump membrane transporter"/>
    <property type="match status" value="1"/>
</dbReference>
<dbReference type="FunFam" id="3.30.2090.10:FF:000004">
    <property type="entry name" value="Multidrug resistance protein MdtC"/>
    <property type="match status" value="1"/>
</dbReference>
<dbReference type="FunFam" id="3.30.2090.10:FF:000005">
    <property type="entry name" value="Multidrug resistance protein MdtC"/>
    <property type="match status" value="1"/>
</dbReference>
<dbReference type="FunFam" id="3.30.70.1430:FF:000004">
    <property type="entry name" value="Multidrug resistance protein MdtC"/>
    <property type="match status" value="1"/>
</dbReference>
<dbReference type="Gene3D" id="3.30.70.1430">
    <property type="entry name" value="Multidrug efflux transporter AcrB pore domain"/>
    <property type="match status" value="2"/>
</dbReference>
<dbReference type="Gene3D" id="3.30.70.1440">
    <property type="entry name" value="Multidrug efflux transporter AcrB pore domain"/>
    <property type="match status" value="1"/>
</dbReference>
<dbReference type="Gene3D" id="3.30.70.1320">
    <property type="entry name" value="Multidrug efflux transporter AcrB pore domain like"/>
    <property type="match status" value="1"/>
</dbReference>
<dbReference type="Gene3D" id="3.30.2090.10">
    <property type="entry name" value="Multidrug efflux transporter AcrB TolC docking domain, DN and DC subdomains"/>
    <property type="match status" value="2"/>
</dbReference>
<dbReference type="Gene3D" id="1.20.1640.10">
    <property type="entry name" value="Multidrug efflux transporter AcrB transmembrane domain"/>
    <property type="match status" value="2"/>
</dbReference>
<dbReference type="HAMAP" id="MF_01424">
    <property type="entry name" value="MdtC"/>
    <property type="match status" value="1"/>
</dbReference>
<dbReference type="InterPro" id="IPR027463">
    <property type="entry name" value="AcrB_DN_DC_subdom"/>
</dbReference>
<dbReference type="InterPro" id="IPR001036">
    <property type="entry name" value="Acrflvin-R"/>
</dbReference>
<dbReference type="InterPro" id="IPR023931">
    <property type="entry name" value="Multidrug-R_MdtC"/>
</dbReference>
<dbReference type="NCBIfam" id="NF007905">
    <property type="entry name" value="PRK10614.1"/>
    <property type="match status" value="1"/>
</dbReference>
<dbReference type="NCBIfam" id="NF033617">
    <property type="entry name" value="RND_permease_2"/>
    <property type="match status" value="1"/>
</dbReference>
<dbReference type="PANTHER" id="PTHR32063">
    <property type="match status" value="1"/>
</dbReference>
<dbReference type="PANTHER" id="PTHR32063:SF34">
    <property type="entry name" value="MULTIDRUG RESISTANCE PROTEIN MDTC"/>
    <property type="match status" value="1"/>
</dbReference>
<dbReference type="Pfam" id="PF00873">
    <property type="entry name" value="ACR_tran"/>
    <property type="match status" value="1"/>
</dbReference>
<dbReference type="PRINTS" id="PR00702">
    <property type="entry name" value="ACRIFLAVINRP"/>
</dbReference>
<dbReference type="SUPFAM" id="SSF82693">
    <property type="entry name" value="Multidrug efflux transporter AcrB pore domain, PN1, PN2, PC1 and PC2 subdomains"/>
    <property type="match status" value="4"/>
</dbReference>
<dbReference type="SUPFAM" id="SSF82714">
    <property type="entry name" value="Multidrug efflux transporter AcrB TolC docking domain, DN and DC subdomains"/>
    <property type="match status" value="2"/>
</dbReference>
<dbReference type="SUPFAM" id="SSF82866">
    <property type="entry name" value="Multidrug efflux transporter AcrB transmembrane domain"/>
    <property type="match status" value="2"/>
</dbReference>
<keyword id="KW-0997">Cell inner membrane</keyword>
<keyword id="KW-1003">Cell membrane</keyword>
<keyword id="KW-0472">Membrane</keyword>
<keyword id="KW-0812">Transmembrane</keyword>
<keyword id="KW-1133">Transmembrane helix</keyword>
<keyword id="KW-0813">Transport</keyword>
<proteinExistence type="evidence at transcript level"/>
<evidence type="ECO:0000255" key="1">
    <source>
        <dbReference type="HAMAP-Rule" id="MF_01424"/>
    </source>
</evidence>
<gene>
    <name evidence="1" type="primary">mdtC</name>
    <name type="ordered locus">UTI89_C2351</name>
</gene>
<organism>
    <name type="scientific">Escherichia coli (strain UTI89 / UPEC)</name>
    <dbReference type="NCBI Taxonomy" id="364106"/>
    <lineage>
        <taxon>Bacteria</taxon>
        <taxon>Pseudomonadati</taxon>
        <taxon>Pseudomonadota</taxon>
        <taxon>Gammaproteobacteria</taxon>
        <taxon>Enterobacterales</taxon>
        <taxon>Enterobacteriaceae</taxon>
        <taxon>Escherichia</taxon>
    </lineage>
</organism>
<sequence length="1025" mass="110951">MKFFALFIYRPVATILLSVAITLCGILGFRMLPVAPLPQVDFPVIMVSASLPGASPETMASSVATPLERSLGRIAGVSEMTSSSSLGSTRIILQFDFDRDINGAARDVQAAINAAQSLLPSGMPSRPTYRKANPSDAPIMILTLTSDTYSQGELYDFASTQLAPTISQIDGVGDVDVGGSSLPAVRVGLNPQALFNQGVSLDDVRTAISNANVRKPQGALEDGTHRWQIQTNDELKTAAEYQPLIIHYNNGGAVRLGDVATVTDSVQDVRNAGMTNAKPAILLMIRKLPEANIIQTVDSIRARLPELQSTIPAAIDLQIAQDRSPTIRASLEEVEQTLIISVALVILVVFLFLRSGRATIIPAVAVPVSLIGTFAAMYLCGFSLNNLSLMALTIATGFVVDDAIVVLENIARHLEAGMKPLQAALQGTREVGFTVLSMSLSLVAVFLPLLLMGGLPGRLLREFAVTLSVAIGISLLVSLTLTPMMCGWMLKASKPREQKRLRGFGRMLVALQQGYGKSLKWVLNHTRLVGVVLLGTIALNIWLYISIPKTFFPEQDTGVLMGGIQADQSISFQAMRGKLQDFMKIIRDDPAVDNVTGFTGGSRVNSGMMFITLKPRGERSETAQQIIDRLRKKLAKEPGANLFLMAVQDIRVGGRQANASYQYTLLSDDLAALREWEPKIRKKLATLPELADVNSDQEDNGAEMNLIYDRDTMARLGIDVQAANSLLNNAFGQRQISTIYQPMNQYKVVMEVDPRYTQDISALEKMFVINNEGKAIPLSYFAKWQPANAPLSVNHQGLSAASTISFNLPTGKSLSDASAAIDRAMTQLGVPSTVRGSFAGTAQVFQETMNSQVILIIAAIATVYIVLGILYESYVHPLTILSTLPSAGVGALLALQLFNAPFSLIALIGIMLLIGIVKKNAIMMVDFALEAQRHGNLTPQEAIFQACLLRFRPIMMTTLAALFGALPLVLSGGDGSELRQPLGITIVGGLVMSQLLTLYTTPVVYLFFDRLRLRFSRKPKQAVTE</sequence>
<name>MDTC_ECOUT</name>
<feature type="chain" id="PRO_1000024312" description="Multidrug resistance protein MdtC">
    <location>
        <begin position="1"/>
        <end position="1025"/>
    </location>
</feature>
<feature type="transmembrane region" description="Helical" evidence="1">
    <location>
        <begin position="3"/>
        <end position="23"/>
    </location>
</feature>
<feature type="transmembrane region" description="Helical" evidence="1">
    <location>
        <begin position="333"/>
        <end position="353"/>
    </location>
</feature>
<feature type="transmembrane region" description="Helical" evidence="1">
    <location>
        <begin position="360"/>
        <end position="380"/>
    </location>
</feature>
<feature type="transmembrane region" description="Helical" evidence="1">
    <location>
        <begin position="387"/>
        <end position="407"/>
    </location>
</feature>
<feature type="transmembrane region" description="Helical" evidence="1">
    <location>
        <begin position="431"/>
        <end position="451"/>
    </location>
</feature>
<feature type="transmembrane region" description="Helical" evidence="1">
    <location>
        <begin position="463"/>
        <end position="483"/>
    </location>
</feature>
<feature type="transmembrane region" description="Helical" evidence="1">
    <location>
        <begin position="528"/>
        <end position="548"/>
    </location>
</feature>
<feature type="transmembrane region" description="Helical" evidence="1">
    <location>
        <begin position="853"/>
        <end position="873"/>
    </location>
</feature>
<feature type="transmembrane region" description="Helical" evidence="1">
    <location>
        <begin position="875"/>
        <end position="895"/>
    </location>
</feature>
<feature type="transmembrane region" description="Helical" evidence="1">
    <location>
        <begin position="897"/>
        <end position="917"/>
    </location>
</feature>
<feature type="transmembrane region" description="Helical" evidence="1">
    <location>
        <begin position="953"/>
        <end position="973"/>
    </location>
</feature>
<feature type="transmembrane region" description="Helical" evidence="1">
    <location>
        <begin position="984"/>
        <end position="1004"/>
    </location>
</feature>
<comment type="function">
    <text evidence="1">The MdtABC tripartite complex confers resistance against novobiocin and deoxycholate.</text>
</comment>
<comment type="subunit">
    <text evidence="1">Part of a tripartite efflux system composed of MdtA, MdtB and MdtC. MdtC forms a heteromultimer with MdtB.</text>
</comment>
<comment type="subcellular location">
    <subcellularLocation>
        <location evidence="1">Cell inner membrane</location>
        <topology evidence="1">Multi-pass membrane protein</topology>
    </subcellularLocation>
</comment>
<comment type="induction">
    <text>The mdtABC operon is transcriptionally activated by BaeR.</text>
</comment>
<comment type="similarity">
    <text evidence="1">Belongs to the resistance-nodulation-cell division (RND) (TC 2.A.6) family. MdtC subfamily.</text>
</comment>
<protein>
    <recommendedName>
        <fullName evidence="1">Multidrug resistance protein MdtC</fullName>
    </recommendedName>
    <alternativeName>
        <fullName evidence="1">Multidrug transporter MdtC</fullName>
    </alternativeName>
</protein>
<accession>Q1R9Z5</accession>